<comment type="subunit">
    <text evidence="1">Forms oligomers.</text>
</comment>
<comment type="subcellular location">
    <subcellularLocation>
        <location evidence="1">Cytoplasm</location>
        <location evidence="1">Nucleoid</location>
    </subcellularLocation>
</comment>
<comment type="similarity">
    <text evidence="1">Belongs to the MraZ family.</text>
</comment>
<name>MRAZ_BURM7</name>
<dbReference type="EMBL" id="CP000548">
    <property type="protein sequence ID" value="ABO04208.1"/>
    <property type="molecule type" value="Genomic_DNA"/>
</dbReference>
<dbReference type="RefSeq" id="WP_004194130.1">
    <property type="nucleotide sequence ID" value="NZ_CP007802.1"/>
</dbReference>
<dbReference type="SMR" id="A3MR54"/>
<dbReference type="GeneID" id="93061636"/>
<dbReference type="KEGG" id="bmaz:BM44_146"/>
<dbReference type="KEGG" id="bmn:BMA10247_3223"/>
<dbReference type="PATRIC" id="fig|320389.8.peg.155"/>
<dbReference type="GO" id="GO:0005737">
    <property type="term" value="C:cytoplasm"/>
    <property type="evidence" value="ECO:0007669"/>
    <property type="project" value="UniProtKB-UniRule"/>
</dbReference>
<dbReference type="GO" id="GO:0009295">
    <property type="term" value="C:nucleoid"/>
    <property type="evidence" value="ECO:0007669"/>
    <property type="project" value="UniProtKB-SubCell"/>
</dbReference>
<dbReference type="GO" id="GO:0003700">
    <property type="term" value="F:DNA-binding transcription factor activity"/>
    <property type="evidence" value="ECO:0007669"/>
    <property type="project" value="UniProtKB-UniRule"/>
</dbReference>
<dbReference type="GO" id="GO:0000976">
    <property type="term" value="F:transcription cis-regulatory region binding"/>
    <property type="evidence" value="ECO:0007669"/>
    <property type="project" value="TreeGrafter"/>
</dbReference>
<dbReference type="GO" id="GO:2000143">
    <property type="term" value="P:negative regulation of DNA-templated transcription initiation"/>
    <property type="evidence" value="ECO:0007669"/>
    <property type="project" value="TreeGrafter"/>
</dbReference>
<dbReference type="CDD" id="cd16321">
    <property type="entry name" value="MraZ_C"/>
    <property type="match status" value="1"/>
</dbReference>
<dbReference type="CDD" id="cd16320">
    <property type="entry name" value="MraZ_N"/>
    <property type="match status" value="1"/>
</dbReference>
<dbReference type="Gene3D" id="3.40.1550.20">
    <property type="entry name" value="Transcriptional regulator MraZ domain"/>
    <property type="match status" value="1"/>
</dbReference>
<dbReference type="HAMAP" id="MF_01008">
    <property type="entry name" value="MraZ"/>
    <property type="match status" value="1"/>
</dbReference>
<dbReference type="InterPro" id="IPR003444">
    <property type="entry name" value="MraZ"/>
</dbReference>
<dbReference type="InterPro" id="IPR035644">
    <property type="entry name" value="MraZ_C"/>
</dbReference>
<dbReference type="InterPro" id="IPR020603">
    <property type="entry name" value="MraZ_dom"/>
</dbReference>
<dbReference type="InterPro" id="IPR035642">
    <property type="entry name" value="MraZ_N"/>
</dbReference>
<dbReference type="InterPro" id="IPR038619">
    <property type="entry name" value="MraZ_sf"/>
</dbReference>
<dbReference type="InterPro" id="IPR007159">
    <property type="entry name" value="SpoVT-AbrB_dom"/>
</dbReference>
<dbReference type="InterPro" id="IPR037914">
    <property type="entry name" value="SpoVT-AbrB_sf"/>
</dbReference>
<dbReference type="NCBIfam" id="TIGR00242">
    <property type="entry name" value="division/cell wall cluster transcriptional repressor MraZ"/>
    <property type="match status" value="1"/>
</dbReference>
<dbReference type="PANTHER" id="PTHR34701">
    <property type="entry name" value="TRANSCRIPTIONAL REGULATOR MRAZ"/>
    <property type="match status" value="1"/>
</dbReference>
<dbReference type="PANTHER" id="PTHR34701:SF1">
    <property type="entry name" value="TRANSCRIPTIONAL REGULATOR MRAZ"/>
    <property type="match status" value="1"/>
</dbReference>
<dbReference type="Pfam" id="PF02381">
    <property type="entry name" value="MraZ"/>
    <property type="match status" value="2"/>
</dbReference>
<dbReference type="SUPFAM" id="SSF89447">
    <property type="entry name" value="AbrB/MazE/MraZ-like"/>
    <property type="match status" value="1"/>
</dbReference>
<dbReference type="PROSITE" id="PS51740">
    <property type="entry name" value="SPOVT_ABRB"/>
    <property type="match status" value="2"/>
</dbReference>
<reference key="1">
    <citation type="journal article" date="2010" name="Genome Biol. Evol.">
        <title>Continuing evolution of Burkholderia mallei through genome reduction and large-scale rearrangements.</title>
        <authorList>
            <person name="Losada L."/>
            <person name="Ronning C.M."/>
            <person name="DeShazer D."/>
            <person name="Woods D."/>
            <person name="Fedorova N."/>
            <person name="Kim H.S."/>
            <person name="Shabalina S.A."/>
            <person name="Pearson T.R."/>
            <person name="Brinkac L."/>
            <person name="Tan P."/>
            <person name="Nandi T."/>
            <person name="Crabtree J."/>
            <person name="Badger J."/>
            <person name="Beckstrom-Sternberg S."/>
            <person name="Saqib M."/>
            <person name="Schutzer S.E."/>
            <person name="Keim P."/>
            <person name="Nierman W.C."/>
        </authorList>
    </citation>
    <scope>NUCLEOTIDE SEQUENCE [LARGE SCALE GENOMIC DNA]</scope>
    <source>
        <strain>NCTC 10247</strain>
    </source>
</reference>
<organism>
    <name type="scientific">Burkholderia mallei (strain NCTC 10247)</name>
    <dbReference type="NCBI Taxonomy" id="320389"/>
    <lineage>
        <taxon>Bacteria</taxon>
        <taxon>Pseudomonadati</taxon>
        <taxon>Pseudomonadota</taxon>
        <taxon>Betaproteobacteria</taxon>
        <taxon>Burkholderiales</taxon>
        <taxon>Burkholderiaceae</taxon>
        <taxon>Burkholderia</taxon>
        <taxon>pseudomallei group</taxon>
    </lineage>
</organism>
<evidence type="ECO:0000255" key="1">
    <source>
        <dbReference type="HAMAP-Rule" id="MF_01008"/>
    </source>
</evidence>
<evidence type="ECO:0000255" key="2">
    <source>
        <dbReference type="PROSITE-ProRule" id="PRU01076"/>
    </source>
</evidence>
<gene>
    <name evidence="1" type="primary">mraZ</name>
    <name type="ordered locus">BMA10247_3223</name>
</gene>
<accession>A3MR54</accession>
<keyword id="KW-0963">Cytoplasm</keyword>
<keyword id="KW-0238">DNA-binding</keyword>
<keyword id="KW-0677">Repeat</keyword>
<keyword id="KW-0804">Transcription</keyword>
<keyword id="KW-0805">Transcription regulation</keyword>
<proteinExistence type="inferred from homology"/>
<sequence>MFQGASALTLDAKGRMSVPSRYREALQGQAEGRVTVTKHPDGCLLLFPRPEWEVFRAKIAALPMDAHWWRRIFLGNAMDVDLDSAGRILVSPELRMAAGLEKEVMLLGMGSHFELWDAQTYTAKEQAAMAQGMPEALKNFTF</sequence>
<protein>
    <recommendedName>
        <fullName>Transcriptional regulator MraZ</fullName>
    </recommendedName>
</protein>
<feature type="chain" id="PRO_1000062853" description="Transcriptional regulator MraZ">
    <location>
        <begin position="1"/>
        <end position="142"/>
    </location>
</feature>
<feature type="domain" description="SpoVT-AbrB 1" evidence="2">
    <location>
        <begin position="5"/>
        <end position="51"/>
    </location>
</feature>
<feature type="domain" description="SpoVT-AbrB 2" evidence="2">
    <location>
        <begin position="77"/>
        <end position="120"/>
    </location>
</feature>